<feature type="chain" id="PRO_1000083324" description="Fructose-bisphosphate aldolase class 1">
    <location>
        <begin position="1"/>
        <end position="296"/>
    </location>
</feature>
<feature type="active site" description="Proton acceptor" evidence="1">
    <location>
        <position position="175"/>
    </location>
</feature>
<feature type="active site" description="Schiff-base intermediate with dihydroxyacetone-P" evidence="1">
    <location>
        <position position="212"/>
    </location>
</feature>
<reference key="1">
    <citation type="submission" date="2007-06" db="EMBL/GenBank/DDBJ databases">
        <title>Complete sequence of chromosome of Staphylococcus aureus subsp. aureus JH1.</title>
        <authorList>
            <consortium name="US DOE Joint Genome Institute"/>
            <person name="Copeland A."/>
            <person name="Lucas S."/>
            <person name="Lapidus A."/>
            <person name="Barry K."/>
            <person name="Detter J.C."/>
            <person name="Glavina del Rio T."/>
            <person name="Hammon N."/>
            <person name="Israni S."/>
            <person name="Dalin E."/>
            <person name="Tice H."/>
            <person name="Pitluck S."/>
            <person name="Chain P."/>
            <person name="Malfatti S."/>
            <person name="Shin M."/>
            <person name="Vergez L."/>
            <person name="Schmutz J."/>
            <person name="Larimer F."/>
            <person name="Land M."/>
            <person name="Hauser L."/>
            <person name="Kyrpides N."/>
            <person name="Ivanova N."/>
            <person name="Tomasz A."/>
            <person name="Richardson P."/>
        </authorList>
    </citation>
    <scope>NUCLEOTIDE SEQUENCE [LARGE SCALE GENOMIC DNA]</scope>
    <source>
        <strain>JH1</strain>
    </source>
</reference>
<accession>A6U4Y6</accession>
<sequence length="296" mass="33042">MNKEQLEKMKNGKGFIAALDQSGGSTPKALKEYGVNEDQYSNEDEMFQLVHDMRTRVVTSPSFSPDKILGAILFEQTMDREVEGKYTADYLADKGVVPFLKVDKGLAEEQNGVQLMKPIDNLDSLLDRANERHIFGTKMRSNILELNEQGIKDVVEQQFEVAKQIIAKGLVPIIEPEVNINAKDKAEIEKVLKAELKKGLDSLNADQLVMLKLTIPTEPNLYKELAEHPNVVRVVVLSGGYSREKANELLKDNDELIASFSRALASDLRADQSKEEFDKALGDAVESIYDASVNKN</sequence>
<organism>
    <name type="scientific">Staphylococcus aureus (strain JH1)</name>
    <dbReference type="NCBI Taxonomy" id="359787"/>
    <lineage>
        <taxon>Bacteria</taxon>
        <taxon>Bacillati</taxon>
        <taxon>Bacillota</taxon>
        <taxon>Bacilli</taxon>
        <taxon>Bacillales</taxon>
        <taxon>Staphylococcaceae</taxon>
        <taxon>Staphylococcus</taxon>
    </lineage>
</organism>
<protein>
    <recommendedName>
        <fullName evidence="1">Fructose-bisphosphate aldolase class 1</fullName>
        <ecNumber evidence="1">4.1.2.13</ecNumber>
    </recommendedName>
    <alternativeName>
        <fullName>Fructose-bisphosphate aldolase class I</fullName>
        <shortName evidence="1">FBP aldolase</shortName>
    </alternativeName>
</protein>
<comment type="catalytic activity">
    <reaction evidence="1">
        <text>beta-D-fructose 1,6-bisphosphate = D-glyceraldehyde 3-phosphate + dihydroxyacetone phosphate</text>
        <dbReference type="Rhea" id="RHEA:14729"/>
        <dbReference type="ChEBI" id="CHEBI:32966"/>
        <dbReference type="ChEBI" id="CHEBI:57642"/>
        <dbReference type="ChEBI" id="CHEBI:59776"/>
        <dbReference type="EC" id="4.1.2.13"/>
    </reaction>
</comment>
<comment type="pathway">
    <text evidence="1">Carbohydrate degradation; glycolysis; D-glyceraldehyde 3-phosphate and glycerone phosphate from D-glucose: step 4/4.</text>
</comment>
<comment type="similarity">
    <text evidence="1">Belongs to the class I fructose-bisphosphate aldolase family.</text>
</comment>
<gene>
    <name evidence="1" type="primary">fda</name>
    <name type="ordered locus">SaurJH1_2682</name>
</gene>
<name>ALF1_STAA2</name>
<dbReference type="EC" id="4.1.2.13" evidence="1"/>
<dbReference type="EMBL" id="CP000736">
    <property type="protein sequence ID" value="ABR53504.1"/>
    <property type="molecule type" value="Genomic_DNA"/>
</dbReference>
<dbReference type="SMR" id="A6U4Y6"/>
<dbReference type="KEGG" id="sah:SaurJH1_2682"/>
<dbReference type="HOGENOM" id="CLU_081560_0_0_9"/>
<dbReference type="UniPathway" id="UPA00109">
    <property type="reaction ID" value="UER00183"/>
</dbReference>
<dbReference type="GO" id="GO:0004332">
    <property type="term" value="F:fructose-bisphosphate aldolase activity"/>
    <property type="evidence" value="ECO:0007669"/>
    <property type="project" value="UniProtKB-UniRule"/>
</dbReference>
<dbReference type="GO" id="GO:0006096">
    <property type="term" value="P:glycolytic process"/>
    <property type="evidence" value="ECO:0007669"/>
    <property type="project" value="UniProtKB-UniRule"/>
</dbReference>
<dbReference type="Gene3D" id="3.20.20.70">
    <property type="entry name" value="Aldolase class I"/>
    <property type="match status" value="1"/>
</dbReference>
<dbReference type="HAMAP" id="MF_00729">
    <property type="entry name" value="FBP_aldolase_1"/>
    <property type="match status" value="1"/>
</dbReference>
<dbReference type="InterPro" id="IPR013785">
    <property type="entry name" value="Aldolase_TIM"/>
</dbReference>
<dbReference type="InterPro" id="IPR000741">
    <property type="entry name" value="FBA_I"/>
</dbReference>
<dbReference type="InterPro" id="IPR023014">
    <property type="entry name" value="FBA_I_Gram+-type"/>
</dbReference>
<dbReference type="NCBIfam" id="NF003784">
    <property type="entry name" value="PRK05377.1"/>
    <property type="match status" value="1"/>
</dbReference>
<dbReference type="PANTHER" id="PTHR11627">
    <property type="entry name" value="FRUCTOSE-BISPHOSPHATE ALDOLASE"/>
    <property type="match status" value="1"/>
</dbReference>
<dbReference type="Pfam" id="PF00274">
    <property type="entry name" value="Glycolytic"/>
    <property type="match status" value="1"/>
</dbReference>
<dbReference type="SUPFAM" id="SSF51569">
    <property type="entry name" value="Aldolase"/>
    <property type="match status" value="1"/>
</dbReference>
<keyword id="KW-0324">Glycolysis</keyword>
<keyword id="KW-0456">Lyase</keyword>
<keyword id="KW-0704">Schiff base</keyword>
<proteinExistence type="inferred from homology"/>
<evidence type="ECO:0000255" key="1">
    <source>
        <dbReference type="HAMAP-Rule" id="MF_00729"/>
    </source>
</evidence>